<feature type="chain" id="PRO_0000402617" description="Pyrimidine monooxygenase RutA">
    <location>
        <begin position="1"/>
        <end position="382"/>
    </location>
</feature>
<feature type="binding site" evidence="1">
    <location>
        <begin position="68"/>
        <end position="69"/>
    </location>
    <ligand>
        <name>FMN</name>
        <dbReference type="ChEBI" id="CHEBI:58210"/>
    </ligand>
</feature>
<feature type="binding site" evidence="1">
    <location>
        <position position="134"/>
    </location>
    <ligand>
        <name>FMN</name>
        <dbReference type="ChEBI" id="CHEBI:58210"/>
    </ligand>
</feature>
<feature type="binding site" evidence="1">
    <location>
        <position position="143"/>
    </location>
    <ligand>
        <name>FMN</name>
        <dbReference type="ChEBI" id="CHEBI:58210"/>
    </ligand>
</feature>
<feature type="binding site" evidence="1">
    <location>
        <begin position="159"/>
        <end position="160"/>
    </location>
    <ligand>
        <name>FMN</name>
        <dbReference type="ChEBI" id="CHEBI:58210"/>
    </ligand>
</feature>
<feature type="binding site" evidence="1">
    <location>
        <position position="209"/>
    </location>
    <ligand>
        <name>FMN</name>
        <dbReference type="ChEBI" id="CHEBI:58210"/>
    </ligand>
</feature>
<proteinExistence type="inferred from homology"/>
<evidence type="ECO:0000255" key="1">
    <source>
        <dbReference type="HAMAP-Rule" id="MF_01699"/>
    </source>
</evidence>
<comment type="function">
    <text evidence="1">Catalyzes the pyrimidine ring opening between N-3 and C-4 by an unusual flavin hydroperoxide-catalyzed mechanism, adding oxygen atoms in the process to yield ureidoacrylate peracid, that immediately reacts with FMN forming ureidoacrylate and FMN-N(5)-oxide. The FMN-N(5)-oxide reacts spontaneously with NADH to produce FMN. Requires the flavin reductase RutF to regenerate FMN in vivo.</text>
</comment>
<comment type="catalytic activity">
    <reaction evidence="1">
        <text>uracil + FMNH2 + NADH + O2 = (Z)-3-ureidoacrylate + FMN + NAD(+) + H2O + H(+)</text>
        <dbReference type="Rhea" id="RHEA:31587"/>
        <dbReference type="ChEBI" id="CHEBI:15377"/>
        <dbReference type="ChEBI" id="CHEBI:15378"/>
        <dbReference type="ChEBI" id="CHEBI:15379"/>
        <dbReference type="ChEBI" id="CHEBI:17568"/>
        <dbReference type="ChEBI" id="CHEBI:57540"/>
        <dbReference type="ChEBI" id="CHEBI:57618"/>
        <dbReference type="ChEBI" id="CHEBI:57945"/>
        <dbReference type="ChEBI" id="CHEBI:58210"/>
        <dbReference type="ChEBI" id="CHEBI:59891"/>
        <dbReference type="EC" id="1.14.99.46"/>
    </reaction>
</comment>
<comment type="catalytic activity">
    <reaction evidence="1">
        <text>thymine + FMNH2 + NADH + O2 = (Z)-2-methylureidoacrylate + FMN + NAD(+) + H2O + H(+)</text>
        <dbReference type="Rhea" id="RHEA:31599"/>
        <dbReference type="ChEBI" id="CHEBI:15377"/>
        <dbReference type="ChEBI" id="CHEBI:15378"/>
        <dbReference type="ChEBI" id="CHEBI:15379"/>
        <dbReference type="ChEBI" id="CHEBI:17821"/>
        <dbReference type="ChEBI" id="CHEBI:57540"/>
        <dbReference type="ChEBI" id="CHEBI:57618"/>
        <dbReference type="ChEBI" id="CHEBI:57945"/>
        <dbReference type="ChEBI" id="CHEBI:58210"/>
        <dbReference type="ChEBI" id="CHEBI:143783"/>
        <dbReference type="EC" id="1.14.99.46"/>
    </reaction>
</comment>
<comment type="induction">
    <text evidence="1">Up-regulated by the nitrogen regulatory protein C (NtrC also called GlnG) and repressed by RutR.</text>
</comment>
<comment type="similarity">
    <text evidence="1">Belongs to the NtaA/SnaA/DszA monooxygenase family. RutA subfamily.</text>
</comment>
<dbReference type="EC" id="1.14.99.46" evidence="1"/>
<dbReference type="EMBL" id="CP001846">
    <property type="protein sequence ID" value="ADD55843.1"/>
    <property type="molecule type" value="Genomic_DNA"/>
</dbReference>
<dbReference type="SMR" id="D3QPK5"/>
<dbReference type="KEGG" id="eok:G2583_1245"/>
<dbReference type="HOGENOM" id="CLU_027853_1_1_6"/>
<dbReference type="GO" id="GO:0008726">
    <property type="term" value="F:alkanesulfonate monooxygenase activity"/>
    <property type="evidence" value="ECO:0007669"/>
    <property type="project" value="TreeGrafter"/>
</dbReference>
<dbReference type="GO" id="GO:0052614">
    <property type="term" value="F:uracil oxygenase activity"/>
    <property type="evidence" value="ECO:0007669"/>
    <property type="project" value="UniProtKB-EC"/>
</dbReference>
<dbReference type="GO" id="GO:0046306">
    <property type="term" value="P:alkanesulfonate catabolic process"/>
    <property type="evidence" value="ECO:0007669"/>
    <property type="project" value="TreeGrafter"/>
</dbReference>
<dbReference type="GO" id="GO:0019740">
    <property type="term" value="P:nitrogen utilization"/>
    <property type="evidence" value="ECO:0007669"/>
    <property type="project" value="UniProtKB-UniRule"/>
</dbReference>
<dbReference type="GO" id="GO:0006212">
    <property type="term" value="P:uracil catabolic process"/>
    <property type="evidence" value="ECO:0007669"/>
    <property type="project" value="UniProtKB-UniRule"/>
</dbReference>
<dbReference type="CDD" id="cd01094">
    <property type="entry name" value="Alkanesulfonate_monoxygenase"/>
    <property type="match status" value="1"/>
</dbReference>
<dbReference type="FunFam" id="3.20.20.30:FF:000003">
    <property type="entry name" value="Pyrimidine monooxygenase RutA"/>
    <property type="match status" value="1"/>
</dbReference>
<dbReference type="Gene3D" id="3.20.20.30">
    <property type="entry name" value="Luciferase-like domain"/>
    <property type="match status" value="1"/>
</dbReference>
<dbReference type="HAMAP" id="MF_01699">
    <property type="entry name" value="RutA"/>
    <property type="match status" value="1"/>
</dbReference>
<dbReference type="InterPro" id="IPR011251">
    <property type="entry name" value="Luciferase-like_dom"/>
</dbReference>
<dbReference type="InterPro" id="IPR036661">
    <property type="entry name" value="Luciferase-like_sf"/>
</dbReference>
<dbReference type="InterPro" id="IPR019914">
    <property type="entry name" value="Pyrimidine_monooxygenase_RutA"/>
</dbReference>
<dbReference type="InterPro" id="IPR050172">
    <property type="entry name" value="SsuD_RutA_monooxygenase"/>
</dbReference>
<dbReference type="NCBIfam" id="TIGR03612">
    <property type="entry name" value="RutA"/>
    <property type="match status" value="1"/>
</dbReference>
<dbReference type="PANTHER" id="PTHR42847">
    <property type="entry name" value="ALKANESULFONATE MONOOXYGENASE"/>
    <property type="match status" value="1"/>
</dbReference>
<dbReference type="PANTHER" id="PTHR42847:SF4">
    <property type="entry name" value="ALKANESULFONATE MONOOXYGENASE-RELATED"/>
    <property type="match status" value="1"/>
</dbReference>
<dbReference type="Pfam" id="PF00296">
    <property type="entry name" value="Bac_luciferase"/>
    <property type="match status" value="1"/>
</dbReference>
<dbReference type="SUPFAM" id="SSF51679">
    <property type="entry name" value="Bacterial luciferase-like"/>
    <property type="match status" value="1"/>
</dbReference>
<reference key="1">
    <citation type="journal article" date="2010" name="PLoS ONE">
        <title>Derivation of Escherichia coli O157:H7 from its O55:H7 precursor.</title>
        <authorList>
            <person name="Zhou Z."/>
            <person name="Li X."/>
            <person name="Liu B."/>
            <person name="Beutin L."/>
            <person name="Xu J."/>
            <person name="Ren Y."/>
            <person name="Feng L."/>
            <person name="Lan R."/>
            <person name="Reeves P.R."/>
            <person name="Wang L."/>
        </authorList>
    </citation>
    <scope>NUCLEOTIDE SEQUENCE [LARGE SCALE GENOMIC DNA]</scope>
    <source>
        <strain>CB9615 / EPEC</strain>
    </source>
</reference>
<organism>
    <name type="scientific">Escherichia coli O55:H7 (strain CB9615 / EPEC)</name>
    <dbReference type="NCBI Taxonomy" id="701177"/>
    <lineage>
        <taxon>Bacteria</taxon>
        <taxon>Pseudomonadati</taxon>
        <taxon>Pseudomonadota</taxon>
        <taxon>Gammaproteobacteria</taxon>
        <taxon>Enterobacterales</taxon>
        <taxon>Enterobacteriaceae</taxon>
        <taxon>Escherichia</taxon>
    </lineage>
</organism>
<accession>D3QPK5</accession>
<keyword id="KW-0285">Flavoprotein</keyword>
<keyword id="KW-0288">FMN</keyword>
<keyword id="KW-0503">Monooxygenase</keyword>
<keyword id="KW-0521">NADP</keyword>
<keyword id="KW-0560">Oxidoreductase</keyword>
<gene>
    <name evidence="1" type="primary">rutA</name>
    <name type="ordered locus">G2583_1245</name>
</gene>
<sequence>MQDAAPRLTFTLRDEERLMMKIGVFVPIGNNGWLISTHAPQYMPTFELNKAIVQKAEHYHFDFALSMIKLRGFGGKTEFWDHNLESFTLMAGLAAVTSRIQIYATAATLTLPPAIVARMAATIDSISGGRFGVNLVTGWQKPEYEQMGIWPGDDYFSRRYDYLTEYVQVLRDLWGTGKSDFKGDFFTMNDCRVSPQPSVPMKVICAGQSDAGMAFSAQYADFNFCFGKGVNTPTAFAPTAARMKQAAEQTGRDVGSYVLFMVIADETDDAARAKWEHYKAGADEEALSWLTEQSQKDTRSGTDTNVRQMADPTSAVNINMGTLVGSYASVARMLDEVASVPGAEGVLLTFDDFLSGIETFGERIQPLMQCRAHLPVLTQEVA</sequence>
<protein>
    <recommendedName>
        <fullName evidence="1">Pyrimidine monooxygenase RutA</fullName>
        <ecNumber evidence="1">1.14.99.46</ecNumber>
    </recommendedName>
</protein>
<name>RUTA_ECOCB</name>